<reference key="1">
    <citation type="journal article" date="2004" name="Proc. Natl. Acad. Sci. U.S.A.">
        <title>Genomic plasticity of the causative agent of melioidosis, Burkholderia pseudomallei.</title>
        <authorList>
            <person name="Holden M.T.G."/>
            <person name="Titball R.W."/>
            <person name="Peacock S.J."/>
            <person name="Cerdeno-Tarraga A.-M."/>
            <person name="Atkins T."/>
            <person name="Crossman L.C."/>
            <person name="Pitt T."/>
            <person name="Churcher C."/>
            <person name="Mungall K.L."/>
            <person name="Bentley S.D."/>
            <person name="Sebaihia M."/>
            <person name="Thomson N.R."/>
            <person name="Bason N."/>
            <person name="Beacham I.R."/>
            <person name="Brooks K."/>
            <person name="Brown K.A."/>
            <person name="Brown N.F."/>
            <person name="Challis G.L."/>
            <person name="Cherevach I."/>
            <person name="Chillingworth T."/>
            <person name="Cronin A."/>
            <person name="Crossett B."/>
            <person name="Davis P."/>
            <person name="DeShazer D."/>
            <person name="Feltwell T."/>
            <person name="Fraser A."/>
            <person name="Hance Z."/>
            <person name="Hauser H."/>
            <person name="Holroyd S."/>
            <person name="Jagels K."/>
            <person name="Keith K.E."/>
            <person name="Maddison M."/>
            <person name="Moule S."/>
            <person name="Price C."/>
            <person name="Quail M.A."/>
            <person name="Rabbinowitsch E."/>
            <person name="Rutherford K."/>
            <person name="Sanders M."/>
            <person name="Simmonds M."/>
            <person name="Songsivilai S."/>
            <person name="Stevens K."/>
            <person name="Tumapa S."/>
            <person name="Vesaratchavest M."/>
            <person name="Whitehead S."/>
            <person name="Yeats C."/>
            <person name="Barrell B.G."/>
            <person name="Oyston P.C.F."/>
            <person name="Parkhill J."/>
        </authorList>
    </citation>
    <scope>NUCLEOTIDE SEQUENCE [LARGE SCALE GENOMIC DNA]</scope>
    <source>
        <strain>K96243</strain>
    </source>
</reference>
<name>ARGJ_BURPS</name>
<keyword id="KW-0012">Acyltransferase</keyword>
<keyword id="KW-0028">Amino-acid biosynthesis</keyword>
<keyword id="KW-0055">Arginine biosynthesis</keyword>
<keyword id="KW-0068">Autocatalytic cleavage</keyword>
<keyword id="KW-0963">Cytoplasm</keyword>
<keyword id="KW-0511">Multifunctional enzyme</keyword>
<keyword id="KW-1185">Reference proteome</keyword>
<keyword id="KW-0808">Transferase</keyword>
<protein>
    <recommendedName>
        <fullName evidence="1">Arginine biosynthesis bifunctional protein ArgJ</fullName>
    </recommendedName>
    <domain>
        <recommendedName>
            <fullName evidence="1">Glutamate N-acetyltransferase</fullName>
            <ecNumber evidence="1">2.3.1.35</ecNumber>
        </recommendedName>
        <alternativeName>
            <fullName evidence="1">Ornithine acetyltransferase</fullName>
            <shortName evidence="1">OATase</shortName>
        </alternativeName>
        <alternativeName>
            <fullName evidence="1">Ornithine transacetylase</fullName>
        </alternativeName>
    </domain>
    <domain>
        <recommendedName>
            <fullName evidence="1">Amino-acid acetyltransferase</fullName>
            <ecNumber evidence="1">2.3.1.1</ecNumber>
        </recommendedName>
        <alternativeName>
            <fullName evidence="1">N-acetylglutamate synthase</fullName>
            <shortName evidence="1">AGSase</shortName>
        </alternativeName>
    </domain>
    <component>
        <recommendedName>
            <fullName evidence="1">Arginine biosynthesis bifunctional protein ArgJ alpha chain</fullName>
        </recommendedName>
    </component>
    <component>
        <recommendedName>
            <fullName evidence="1">Arginine biosynthesis bifunctional protein ArgJ beta chain</fullName>
        </recommendedName>
    </component>
</protein>
<accession>Q63QK7</accession>
<sequence>MAVNFPSIDPAQLHPVAGVTLGWAEANIRKPNRKDVLVVSVEEGATVSGVFTENRFCAAPVTVCREHLAKVRAGGAGIRALVVNTGNANAGTGEPGLAHARETCAELARLAGIAPGQVLPFSTGVILEPLPIERLKAGLPAALANRAAANWHDAAQAIMTTDTLPKAASRQVTIDGHTITLTGISKGAGMIKPNMATMLGFLAFDAKVAQPVLDALAKDVADHSFNCITIDGDTSTNDSFILIASGKASLPQIASTDSPAYAALREAVTAVAQALAQLIVRDGEGATKFITVTVEGGKSAAECRQIAYAIGHSPLVKTAFYASDPNLGRILAAIGYAGVADLDVGKIDLYLDDVLVAKAGGRNPAYLEEDGQRVMKQSEIAVRVLLGRGDAQATIWTCDLSHDYVSINADYRS</sequence>
<comment type="function">
    <text evidence="1">Catalyzes two activities which are involved in the cyclic version of arginine biosynthesis: the synthesis of N-acetylglutamate from glutamate and acetyl-CoA as the acetyl donor, and of ornithine by transacetylation between N(2)-acetylornithine and glutamate.</text>
</comment>
<comment type="catalytic activity">
    <reaction evidence="1">
        <text>N(2)-acetyl-L-ornithine + L-glutamate = N-acetyl-L-glutamate + L-ornithine</text>
        <dbReference type="Rhea" id="RHEA:15349"/>
        <dbReference type="ChEBI" id="CHEBI:29985"/>
        <dbReference type="ChEBI" id="CHEBI:44337"/>
        <dbReference type="ChEBI" id="CHEBI:46911"/>
        <dbReference type="ChEBI" id="CHEBI:57805"/>
        <dbReference type="EC" id="2.3.1.35"/>
    </reaction>
</comment>
<comment type="catalytic activity">
    <reaction evidence="1">
        <text>L-glutamate + acetyl-CoA = N-acetyl-L-glutamate + CoA + H(+)</text>
        <dbReference type="Rhea" id="RHEA:24292"/>
        <dbReference type="ChEBI" id="CHEBI:15378"/>
        <dbReference type="ChEBI" id="CHEBI:29985"/>
        <dbReference type="ChEBI" id="CHEBI:44337"/>
        <dbReference type="ChEBI" id="CHEBI:57287"/>
        <dbReference type="ChEBI" id="CHEBI:57288"/>
        <dbReference type="EC" id="2.3.1.1"/>
    </reaction>
</comment>
<comment type="pathway">
    <text evidence="1">Amino-acid biosynthesis; L-arginine biosynthesis; L-ornithine and N-acetyl-L-glutamate from L-glutamate and N(2)-acetyl-L-ornithine (cyclic): step 1/1.</text>
</comment>
<comment type="pathway">
    <text evidence="1">Amino-acid biosynthesis; L-arginine biosynthesis; N(2)-acetyl-L-ornithine from L-glutamate: step 1/4.</text>
</comment>
<comment type="subunit">
    <text evidence="1">Heterotetramer of two alpha and two beta chains.</text>
</comment>
<comment type="subcellular location">
    <subcellularLocation>
        <location evidence="1">Cytoplasm</location>
    </subcellularLocation>
</comment>
<comment type="similarity">
    <text evidence="1">Belongs to the ArgJ family.</text>
</comment>
<gene>
    <name evidence="1" type="primary">argJ</name>
    <name type="ordered locus">BPSL3015</name>
</gene>
<dbReference type="EC" id="2.3.1.35" evidence="1"/>
<dbReference type="EC" id="2.3.1.1" evidence="1"/>
<dbReference type="EMBL" id="BX571965">
    <property type="protein sequence ID" value="CAH37027.1"/>
    <property type="molecule type" value="Genomic_DNA"/>
</dbReference>
<dbReference type="RefSeq" id="WP_004549958.1">
    <property type="nucleotide sequence ID" value="NZ_CP009538.1"/>
</dbReference>
<dbReference type="RefSeq" id="YP_109611.1">
    <property type="nucleotide sequence ID" value="NC_006350.1"/>
</dbReference>
<dbReference type="SMR" id="Q63QK7"/>
<dbReference type="STRING" id="272560.BPSL3015"/>
<dbReference type="MEROPS" id="T05.001"/>
<dbReference type="KEGG" id="bps:BPSL3015"/>
<dbReference type="PATRIC" id="fig|272560.51.peg.2253"/>
<dbReference type="eggNOG" id="COG1364">
    <property type="taxonomic scope" value="Bacteria"/>
</dbReference>
<dbReference type="UniPathway" id="UPA00068">
    <property type="reaction ID" value="UER00106"/>
</dbReference>
<dbReference type="UniPathway" id="UPA00068">
    <property type="reaction ID" value="UER00111"/>
</dbReference>
<dbReference type="Proteomes" id="UP000000605">
    <property type="component" value="Chromosome 1"/>
</dbReference>
<dbReference type="GO" id="GO:0005737">
    <property type="term" value="C:cytoplasm"/>
    <property type="evidence" value="ECO:0007669"/>
    <property type="project" value="UniProtKB-SubCell"/>
</dbReference>
<dbReference type="GO" id="GO:0004358">
    <property type="term" value="F:glutamate N-acetyltransferase activity"/>
    <property type="evidence" value="ECO:0007669"/>
    <property type="project" value="UniProtKB-UniRule"/>
</dbReference>
<dbReference type="GO" id="GO:0004042">
    <property type="term" value="F:L-glutamate N-acetyltransferase activity"/>
    <property type="evidence" value="ECO:0007669"/>
    <property type="project" value="UniProtKB-UniRule"/>
</dbReference>
<dbReference type="GO" id="GO:0006526">
    <property type="term" value="P:L-arginine biosynthetic process"/>
    <property type="evidence" value="ECO:0007669"/>
    <property type="project" value="UniProtKB-UniRule"/>
</dbReference>
<dbReference type="GO" id="GO:0006592">
    <property type="term" value="P:ornithine biosynthetic process"/>
    <property type="evidence" value="ECO:0007669"/>
    <property type="project" value="TreeGrafter"/>
</dbReference>
<dbReference type="CDD" id="cd02152">
    <property type="entry name" value="OAT"/>
    <property type="match status" value="1"/>
</dbReference>
<dbReference type="FunFam" id="3.10.20.340:FF:000001">
    <property type="entry name" value="Arginine biosynthesis bifunctional protein ArgJ, chloroplastic"/>
    <property type="match status" value="1"/>
</dbReference>
<dbReference type="FunFam" id="3.60.70.12:FF:000001">
    <property type="entry name" value="Arginine biosynthesis bifunctional protein ArgJ, chloroplastic"/>
    <property type="match status" value="1"/>
</dbReference>
<dbReference type="Gene3D" id="3.30.2330.10">
    <property type="entry name" value="arginine biosynthesis bifunctional protein suprefamily"/>
    <property type="match status" value="1"/>
</dbReference>
<dbReference type="Gene3D" id="3.10.20.340">
    <property type="entry name" value="ArgJ beta chain, C-terminal domain"/>
    <property type="match status" value="1"/>
</dbReference>
<dbReference type="Gene3D" id="3.60.70.12">
    <property type="entry name" value="L-amino peptidase D-ALA esterase/amidase"/>
    <property type="match status" value="1"/>
</dbReference>
<dbReference type="HAMAP" id="MF_01106">
    <property type="entry name" value="ArgJ"/>
    <property type="match status" value="1"/>
</dbReference>
<dbReference type="InterPro" id="IPR002813">
    <property type="entry name" value="Arg_biosynth_ArgJ"/>
</dbReference>
<dbReference type="InterPro" id="IPR016117">
    <property type="entry name" value="ArgJ-like_dom_sf"/>
</dbReference>
<dbReference type="InterPro" id="IPR042195">
    <property type="entry name" value="ArgJ_beta_C"/>
</dbReference>
<dbReference type="NCBIfam" id="TIGR00120">
    <property type="entry name" value="ArgJ"/>
    <property type="match status" value="1"/>
</dbReference>
<dbReference type="NCBIfam" id="NF003802">
    <property type="entry name" value="PRK05388.1"/>
    <property type="match status" value="1"/>
</dbReference>
<dbReference type="PANTHER" id="PTHR23100">
    <property type="entry name" value="ARGININE BIOSYNTHESIS BIFUNCTIONAL PROTEIN ARGJ"/>
    <property type="match status" value="1"/>
</dbReference>
<dbReference type="PANTHER" id="PTHR23100:SF0">
    <property type="entry name" value="ARGININE BIOSYNTHESIS BIFUNCTIONAL PROTEIN ARGJ, MITOCHONDRIAL"/>
    <property type="match status" value="1"/>
</dbReference>
<dbReference type="Pfam" id="PF01960">
    <property type="entry name" value="ArgJ"/>
    <property type="match status" value="1"/>
</dbReference>
<dbReference type="SUPFAM" id="SSF56266">
    <property type="entry name" value="DmpA/ArgJ-like"/>
    <property type="match status" value="1"/>
</dbReference>
<evidence type="ECO:0000255" key="1">
    <source>
        <dbReference type="HAMAP-Rule" id="MF_01106"/>
    </source>
</evidence>
<proteinExistence type="inferred from homology"/>
<organism>
    <name type="scientific">Burkholderia pseudomallei (strain K96243)</name>
    <dbReference type="NCBI Taxonomy" id="272560"/>
    <lineage>
        <taxon>Bacteria</taxon>
        <taxon>Pseudomonadati</taxon>
        <taxon>Pseudomonadota</taxon>
        <taxon>Betaproteobacteria</taxon>
        <taxon>Burkholderiales</taxon>
        <taxon>Burkholderiaceae</taxon>
        <taxon>Burkholderia</taxon>
        <taxon>pseudomallei group</taxon>
    </lineage>
</organism>
<feature type="chain" id="PRO_0000002143" description="Arginine biosynthesis bifunctional protein ArgJ alpha chain" evidence="1">
    <location>
        <begin position="1"/>
        <end position="196"/>
    </location>
</feature>
<feature type="chain" id="PRO_0000002144" description="Arginine biosynthesis bifunctional protein ArgJ beta chain" evidence="1">
    <location>
        <begin position="197"/>
        <end position="413"/>
    </location>
</feature>
<feature type="active site" description="Nucleophile" evidence="1">
    <location>
        <position position="197"/>
    </location>
</feature>
<feature type="binding site" evidence="1">
    <location>
        <position position="160"/>
    </location>
    <ligand>
        <name>substrate</name>
    </ligand>
</feature>
<feature type="binding site" evidence="1">
    <location>
        <position position="186"/>
    </location>
    <ligand>
        <name>substrate</name>
    </ligand>
</feature>
<feature type="binding site" evidence="1">
    <location>
        <position position="197"/>
    </location>
    <ligand>
        <name>substrate</name>
    </ligand>
</feature>
<feature type="binding site" evidence="1">
    <location>
        <position position="284"/>
    </location>
    <ligand>
        <name>substrate</name>
    </ligand>
</feature>
<feature type="binding site" evidence="1">
    <location>
        <position position="408"/>
    </location>
    <ligand>
        <name>substrate</name>
    </ligand>
</feature>
<feature type="binding site" evidence="1">
    <location>
        <position position="413"/>
    </location>
    <ligand>
        <name>substrate</name>
    </ligand>
</feature>
<feature type="site" description="Involved in the stabilization of negative charge on the oxyanion by the formation of the oxyanion hole" evidence="1">
    <location>
        <position position="123"/>
    </location>
</feature>
<feature type="site" description="Involved in the stabilization of negative charge on the oxyanion by the formation of the oxyanion hole" evidence="1">
    <location>
        <position position="124"/>
    </location>
</feature>
<feature type="site" description="Cleavage; by autolysis" evidence="1">
    <location>
        <begin position="196"/>
        <end position="197"/>
    </location>
</feature>